<gene>
    <name evidence="1" type="primary">rps6e</name>
    <name type="ordered locus">PTO0591</name>
</gene>
<accession>Q6L1H6</accession>
<evidence type="ECO:0000255" key="1">
    <source>
        <dbReference type="HAMAP-Rule" id="MF_00512"/>
    </source>
</evidence>
<evidence type="ECO:0000305" key="2"/>
<keyword id="KW-0687">Ribonucleoprotein</keyword>
<keyword id="KW-0689">Ribosomal protein</keyword>
<proteinExistence type="inferred from homology"/>
<protein>
    <recommendedName>
        <fullName evidence="1">Small ribosomal subunit protein eS6</fullName>
    </recommendedName>
    <alternativeName>
        <fullName evidence="2">30S ribosomal protein S6e</fullName>
    </alternativeName>
</protein>
<reference key="1">
    <citation type="journal article" date="2004" name="Proc. Natl. Acad. Sci. U.S.A.">
        <title>Genome sequence of Picrophilus torridus and its implications for life around pH 0.</title>
        <authorList>
            <person name="Fuetterer O."/>
            <person name="Angelov A."/>
            <person name="Liesegang H."/>
            <person name="Gottschalk G."/>
            <person name="Schleper C."/>
            <person name="Schepers B."/>
            <person name="Dock C."/>
            <person name="Antranikian G."/>
            <person name="Liebl W."/>
        </authorList>
    </citation>
    <scope>NUCLEOTIDE SEQUENCE [LARGE SCALE GENOMIC DNA]</scope>
    <source>
        <strain>ATCC 700027 / DSM 9790 / JCM 10055 / NBRC 100828 / KAW 2/3</strain>
    </source>
</reference>
<organism>
    <name type="scientific">Picrophilus torridus (strain ATCC 700027 / DSM 9790 / JCM 10055 / NBRC 100828 / KAW 2/3)</name>
    <dbReference type="NCBI Taxonomy" id="1122961"/>
    <lineage>
        <taxon>Archaea</taxon>
        <taxon>Methanobacteriati</taxon>
        <taxon>Thermoplasmatota</taxon>
        <taxon>Thermoplasmata</taxon>
        <taxon>Thermoplasmatales</taxon>
        <taxon>Picrophilaceae</taxon>
        <taxon>Picrophilus</taxon>
    </lineage>
</organism>
<dbReference type="EMBL" id="AE017261">
    <property type="protein sequence ID" value="AAT43176.1"/>
    <property type="molecule type" value="Genomic_DNA"/>
</dbReference>
<dbReference type="RefSeq" id="WP_011177392.1">
    <property type="nucleotide sequence ID" value="NC_005877.1"/>
</dbReference>
<dbReference type="SMR" id="Q6L1H6"/>
<dbReference type="STRING" id="263820.PTO0591"/>
<dbReference type="PaxDb" id="263820-PTO0591"/>
<dbReference type="GeneID" id="2845118"/>
<dbReference type="KEGG" id="pto:PTO0591"/>
<dbReference type="PATRIC" id="fig|263820.9.peg.621"/>
<dbReference type="eggNOG" id="arCOG01946">
    <property type="taxonomic scope" value="Archaea"/>
</dbReference>
<dbReference type="HOGENOM" id="CLU_109671_1_1_2"/>
<dbReference type="InParanoid" id="Q6L1H6"/>
<dbReference type="OrthoDB" id="7793at2157"/>
<dbReference type="Proteomes" id="UP000000438">
    <property type="component" value="Chromosome"/>
</dbReference>
<dbReference type="GO" id="GO:1990904">
    <property type="term" value="C:ribonucleoprotein complex"/>
    <property type="evidence" value="ECO:0007669"/>
    <property type="project" value="UniProtKB-KW"/>
</dbReference>
<dbReference type="GO" id="GO:0005840">
    <property type="term" value="C:ribosome"/>
    <property type="evidence" value="ECO:0007669"/>
    <property type="project" value="UniProtKB-KW"/>
</dbReference>
<dbReference type="GO" id="GO:0003735">
    <property type="term" value="F:structural constituent of ribosome"/>
    <property type="evidence" value="ECO:0007669"/>
    <property type="project" value="InterPro"/>
</dbReference>
<dbReference type="GO" id="GO:0006412">
    <property type="term" value="P:translation"/>
    <property type="evidence" value="ECO:0007669"/>
    <property type="project" value="UniProtKB-UniRule"/>
</dbReference>
<dbReference type="HAMAP" id="MF_00512">
    <property type="entry name" value="Ribosomal_eS6"/>
    <property type="match status" value="1"/>
</dbReference>
<dbReference type="InterPro" id="IPR001377">
    <property type="entry name" value="Ribosomal_eS6"/>
</dbReference>
<dbReference type="InterPro" id="IPR020924">
    <property type="entry name" value="Ribosomal_eS6_arc"/>
</dbReference>
<dbReference type="NCBIfam" id="NF003294">
    <property type="entry name" value="PRK04290.1-3"/>
    <property type="match status" value="1"/>
</dbReference>
<dbReference type="PANTHER" id="PTHR11502">
    <property type="entry name" value="40S RIBOSOMAL PROTEIN S6"/>
    <property type="match status" value="1"/>
</dbReference>
<dbReference type="Pfam" id="PF01092">
    <property type="entry name" value="Ribosomal_S6e"/>
    <property type="match status" value="1"/>
</dbReference>
<dbReference type="SMART" id="SM01405">
    <property type="entry name" value="Ribosomal_S6e"/>
    <property type="match status" value="1"/>
</dbReference>
<feature type="chain" id="PRO_0000137354" description="Small ribosomal subunit protein eS6">
    <location>
        <begin position="1"/>
        <end position="127"/>
    </location>
</feature>
<comment type="similarity">
    <text evidence="1">Belongs to the eukaryotic ribosomal protein eS6 family.</text>
</comment>
<name>RS6E_PICTO</name>
<sequence length="127" mass="14044">MAVIVIADKNTGKTYKKEIDQNVIGLLTGRRIGDEIDGSFFEMPGYKLKITGGSANNGFPMKKDLPIAGKKRILITYTHGRKGKNGIRKRVTLRGNIVGSDISQLNMIITQYGPQPLEKPEEQKGEQ</sequence>